<keyword id="KW-0131">Cell cycle</keyword>
<keyword id="KW-0132">Cell division</keyword>
<keyword id="KW-0143">Chaperone</keyword>
<keyword id="KW-0963">Cytoplasm</keyword>
<keyword id="KW-0413">Isomerase</keyword>
<keyword id="KW-0697">Rotamase</keyword>
<protein>
    <recommendedName>
        <fullName evidence="1">Trigger factor</fullName>
        <shortName evidence="1">TF</shortName>
        <ecNumber evidence="1">5.2.1.8</ecNumber>
    </recommendedName>
    <alternativeName>
        <fullName evidence="1">PPIase</fullName>
    </alternativeName>
</protein>
<dbReference type="EC" id="5.2.1.8" evidence="1"/>
<dbReference type="EMBL" id="CP000548">
    <property type="protein sequence ID" value="ABO06996.1"/>
    <property type="molecule type" value="Genomic_DNA"/>
</dbReference>
<dbReference type="RefSeq" id="WP_004193941.1">
    <property type="nucleotide sequence ID" value="NZ_CP007802.1"/>
</dbReference>
<dbReference type="SMR" id="A3MKJ9"/>
<dbReference type="GeneID" id="92979197"/>
<dbReference type="KEGG" id="bmaz:BM44_1880"/>
<dbReference type="KEGG" id="bmn:BMA10247_1233"/>
<dbReference type="PATRIC" id="fig|320389.8.peg.2111"/>
<dbReference type="GO" id="GO:0005737">
    <property type="term" value="C:cytoplasm"/>
    <property type="evidence" value="ECO:0007669"/>
    <property type="project" value="UniProtKB-SubCell"/>
</dbReference>
<dbReference type="GO" id="GO:0003755">
    <property type="term" value="F:peptidyl-prolyl cis-trans isomerase activity"/>
    <property type="evidence" value="ECO:0007669"/>
    <property type="project" value="UniProtKB-UniRule"/>
</dbReference>
<dbReference type="GO" id="GO:0044183">
    <property type="term" value="F:protein folding chaperone"/>
    <property type="evidence" value="ECO:0007669"/>
    <property type="project" value="TreeGrafter"/>
</dbReference>
<dbReference type="GO" id="GO:0043022">
    <property type="term" value="F:ribosome binding"/>
    <property type="evidence" value="ECO:0007669"/>
    <property type="project" value="TreeGrafter"/>
</dbReference>
<dbReference type="GO" id="GO:0051083">
    <property type="term" value="P:'de novo' cotranslational protein folding"/>
    <property type="evidence" value="ECO:0007669"/>
    <property type="project" value="TreeGrafter"/>
</dbReference>
<dbReference type="GO" id="GO:0051301">
    <property type="term" value="P:cell division"/>
    <property type="evidence" value="ECO:0007669"/>
    <property type="project" value="UniProtKB-KW"/>
</dbReference>
<dbReference type="GO" id="GO:0061077">
    <property type="term" value="P:chaperone-mediated protein folding"/>
    <property type="evidence" value="ECO:0007669"/>
    <property type="project" value="TreeGrafter"/>
</dbReference>
<dbReference type="GO" id="GO:0015031">
    <property type="term" value="P:protein transport"/>
    <property type="evidence" value="ECO:0007669"/>
    <property type="project" value="UniProtKB-UniRule"/>
</dbReference>
<dbReference type="GO" id="GO:0043335">
    <property type="term" value="P:protein unfolding"/>
    <property type="evidence" value="ECO:0007669"/>
    <property type="project" value="TreeGrafter"/>
</dbReference>
<dbReference type="FunFam" id="3.10.50.40:FF:000001">
    <property type="entry name" value="Trigger factor"/>
    <property type="match status" value="1"/>
</dbReference>
<dbReference type="Gene3D" id="3.10.50.40">
    <property type="match status" value="1"/>
</dbReference>
<dbReference type="Gene3D" id="3.30.70.1050">
    <property type="entry name" value="Trigger factor ribosome-binding domain"/>
    <property type="match status" value="1"/>
</dbReference>
<dbReference type="Gene3D" id="1.10.3120.10">
    <property type="entry name" value="Trigger factor, C-terminal domain"/>
    <property type="match status" value="1"/>
</dbReference>
<dbReference type="HAMAP" id="MF_00303">
    <property type="entry name" value="Trigger_factor_Tig"/>
    <property type="match status" value="1"/>
</dbReference>
<dbReference type="InterPro" id="IPR046357">
    <property type="entry name" value="PPIase_dom_sf"/>
</dbReference>
<dbReference type="InterPro" id="IPR001179">
    <property type="entry name" value="PPIase_FKBP_dom"/>
</dbReference>
<dbReference type="InterPro" id="IPR005215">
    <property type="entry name" value="Trig_fac"/>
</dbReference>
<dbReference type="InterPro" id="IPR008880">
    <property type="entry name" value="Trigger_fac_C"/>
</dbReference>
<dbReference type="InterPro" id="IPR037041">
    <property type="entry name" value="Trigger_fac_C_sf"/>
</dbReference>
<dbReference type="InterPro" id="IPR008881">
    <property type="entry name" value="Trigger_fac_ribosome-bd_bac"/>
</dbReference>
<dbReference type="InterPro" id="IPR036611">
    <property type="entry name" value="Trigger_fac_ribosome-bd_sf"/>
</dbReference>
<dbReference type="InterPro" id="IPR027304">
    <property type="entry name" value="Trigger_fact/SurA_dom_sf"/>
</dbReference>
<dbReference type="NCBIfam" id="TIGR00115">
    <property type="entry name" value="tig"/>
    <property type="match status" value="1"/>
</dbReference>
<dbReference type="PANTHER" id="PTHR30560">
    <property type="entry name" value="TRIGGER FACTOR CHAPERONE AND PEPTIDYL-PROLYL CIS/TRANS ISOMERASE"/>
    <property type="match status" value="1"/>
</dbReference>
<dbReference type="PANTHER" id="PTHR30560:SF3">
    <property type="entry name" value="TRIGGER FACTOR-LIKE PROTEIN TIG, CHLOROPLASTIC"/>
    <property type="match status" value="1"/>
</dbReference>
<dbReference type="Pfam" id="PF00254">
    <property type="entry name" value="FKBP_C"/>
    <property type="match status" value="1"/>
</dbReference>
<dbReference type="Pfam" id="PF05698">
    <property type="entry name" value="Trigger_C"/>
    <property type="match status" value="1"/>
</dbReference>
<dbReference type="Pfam" id="PF05697">
    <property type="entry name" value="Trigger_N"/>
    <property type="match status" value="1"/>
</dbReference>
<dbReference type="PIRSF" id="PIRSF003095">
    <property type="entry name" value="Trigger_factor"/>
    <property type="match status" value="1"/>
</dbReference>
<dbReference type="SUPFAM" id="SSF54534">
    <property type="entry name" value="FKBP-like"/>
    <property type="match status" value="1"/>
</dbReference>
<dbReference type="SUPFAM" id="SSF109998">
    <property type="entry name" value="Triger factor/SurA peptide-binding domain-like"/>
    <property type="match status" value="1"/>
</dbReference>
<dbReference type="SUPFAM" id="SSF102735">
    <property type="entry name" value="Trigger factor ribosome-binding domain"/>
    <property type="match status" value="1"/>
</dbReference>
<dbReference type="PROSITE" id="PS50059">
    <property type="entry name" value="FKBP_PPIASE"/>
    <property type="match status" value="1"/>
</dbReference>
<reference key="1">
    <citation type="journal article" date="2010" name="Genome Biol. Evol.">
        <title>Continuing evolution of Burkholderia mallei through genome reduction and large-scale rearrangements.</title>
        <authorList>
            <person name="Losada L."/>
            <person name="Ronning C.M."/>
            <person name="DeShazer D."/>
            <person name="Woods D."/>
            <person name="Fedorova N."/>
            <person name="Kim H.S."/>
            <person name="Shabalina S.A."/>
            <person name="Pearson T.R."/>
            <person name="Brinkac L."/>
            <person name="Tan P."/>
            <person name="Nandi T."/>
            <person name="Crabtree J."/>
            <person name="Badger J."/>
            <person name="Beckstrom-Sternberg S."/>
            <person name="Saqib M."/>
            <person name="Schutzer S.E."/>
            <person name="Keim P."/>
            <person name="Nierman W.C."/>
        </authorList>
    </citation>
    <scope>NUCLEOTIDE SEQUENCE [LARGE SCALE GENOMIC DNA]</scope>
    <source>
        <strain>NCTC 10247</strain>
    </source>
</reference>
<gene>
    <name evidence="1" type="primary">tig</name>
    <name type="ordered locus">BMA10247_1233</name>
</gene>
<organism>
    <name type="scientific">Burkholderia mallei (strain NCTC 10247)</name>
    <dbReference type="NCBI Taxonomy" id="320389"/>
    <lineage>
        <taxon>Bacteria</taxon>
        <taxon>Pseudomonadati</taxon>
        <taxon>Pseudomonadota</taxon>
        <taxon>Betaproteobacteria</taxon>
        <taxon>Burkholderiales</taxon>
        <taxon>Burkholderiaceae</taxon>
        <taxon>Burkholderia</taxon>
        <taxon>pseudomallei group</taxon>
    </lineage>
</organism>
<name>TIG_BURM7</name>
<sequence>MANVVENLGKLERRVTISLPKDVVQKEIDARIQKLAKNVRMPGFRPGKVPLKMVAQQYAGQVEAEVLSDKIGQEFFTISRAENLRVAGQPSFAPKEDTQQESAYAFDATFEVYPEVKIGDLATAEVERSTTTIGDAEIDRTLDILRKQRVHFHARGEGGEHGDGGADTAAQNGDRVTVDFVGKIDGVAFQGGTAEDFVFVLGEGRMLPEFETAALGLKAGESREFDLKFPDDYHGKDVAGKTAQFTVTLKKVEWPHLPEIDADFAKSLGVEDGDLTKMRAEIKENLEREAKRRTQSIVKNQVMDALLKISELDVPKALIEQDQQRLVEMARQDLAQRGVPNAKDAPIPAEMFADQAERRVKLGLVLAELVKANGLEAKPEQIRAEVDEFAKSYEDPKEVVRWYYSNQQRLAEMEAFVVESNVVDFVLGKAKVTDKEVSFEALASATAQA</sequence>
<accession>A3MKJ9</accession>
<proteinExistence type="inferred from homology"/>
<feature type="chain" id="PRO_1000022653" description="Trigger factor">
    <location>
        <begin position="1"/>
        <end position="449"/>
    </location>
</feature>
<feature type="domain" description="PPIase FKBP-type" evidence="1">
    <location>
        <begin position="173"/>
        <end position="258"/>
    </location>
</feature>
<evidence type="ECO:0000255" key="1">
    <source>
        <dbReference type="HAMAP-Rule" id="MF_00303"/>
    </source>
</evidence>
<comment type="function">
    <text evidence="1">Involved in protein export. Acts as a chaperone by maintaining the newly synthesized protein in an open conformation. Functions as a peptidyl-prolyl cis-trans isomerase.</text>
</comment>
<comment type="catalytic activity">
    <reaction evidence="1">
        <text>[protein]-peptidylproline (omega=180) = [protein]-peptidylproline (omega=0)</text>
        <dbReference type="Rhea" id="RHEA:16237"/>
        <dbReference type="Rhea" id="RHEA-COMP:10747"/>
        <dbReference type="Rhea" id="RHEA-COMP:10748"/>
        <dbReference type="ChEBI" id="CHEBI:83833"/>
        <dbReference type="ChEBI" id="CHEBI:83834"/>
        <dbReference type="EC" id="5.2.1.8"/>
    </reaction>
</comment>
<comment type="subcellular location">
    <subcellularLocation>
        <location>Cytoplasm</location>
    </subcellularLocation>
    <text evidence="1">About half TF is bound to the ribosome near the polypeptide exit tunnel while the other half is free in the cytoplasm.</text>
</comment>
<comment type="domain">
    <text evidence="1">Consists of 3 domains; the N-terminus binds the ribosome, the middle domain has PPIase activity, while the C-terminus has intrinsic chaperone activity on its own.</text>
</comment>
<comment type="similarity">
    <text evidence="1">Belongs to the FKBP-type PPIase family. Tig subfamily.</text>
</comment>